<reference key="1">
    <citation type="journal article" date="2002" name="Proc. Natl. Acad. Sci. U.S.A.">
        <title>Extensive mosaic structure revealed by the complete genome sequence of uropathogenic Escherichia coli.</title>
        <authorList>
            <person name="Welch R.A."/>
            <person name="Burland V."/>
            <person name="Plunkett G. III"/>
            <person name="Redford P."/>
            <person name="Roesch P."/>
            <person name="Rasko D."/>
            <person name="Buckles E.L."/>
            <person name="Liou S.-R."/>
            <person name="Boutin A."/>
            <person name="Hackett J."/>
            <person name="Stroud D."/>
            <person name="Mayhew G.F."/>
            <person name="Rose D.J."/>
            <person name="Zhou S."/>
            <person name="Schwartz D.C."/>
            <person name="Perna N.T."/>
            <person name="Mobley H.L.T."/>
            <person name="Donnenberg M.S."/>
            <person name="Blattner F.R."/>
        </authorList>
    </citation>
    <scope>NUCLEOTIDE SEQUENCE [LARGE SCALE GENOMIC DNA]</scope>
    <source>
        <strain>CFT073 / ATCC 700928 / UPEC</strain>
    </source>
</reference>
<protein>
    <recommendedName>
        <fullName evidence="1">L-lactate permease</fullName>
    </recommendedName>
</protein>
<proteinExistence type="inferred from homology"/>
<feature type="chain" id="PRO_0000210375" description="L-lactate permease">
    <location>
        <begin position="1"/>
        <end position="551"/>
    </location>
</feature>
<feature type="transmembrane region" description="Helical" evidence="2">
    <location>
        <begin position="13"/>
        <end position="33"/>
    </location>
</feature>
<feature type="transmembrane region" description="Helical" evidence="2">
    <location>
        <begin position="37"/>
        <end position="57"/>
    </location>
</feature>
<feature type="transmembrane region" description="Helical" evidence="2">
    <location>
        <begin position="70"/>
        <end position="90"/>
    </location>
</feature>
<feature type="transmembrane region" description="Helical" evidence="2">
    <location>
        <begin position="131"/>
        <end position="151"/>
    </location>
</feature>
<feature type="transmembrane region" description="Helical" evidence="2">
    <location>
        <begin position="159"/>
        <end position="179"/>
    </location>
</feature>
<feature type="transmembrane region" description="Helical" evidence="2">
    <location>
        <begin position="194"/>
        <end position="214"/>
    </location>
</feature>
<feature type="transmembrane region" description="Helical" evidence="2">
    <location>
        <begin position="244"/>
        <end position="264"/>
    </location>
</feature>
<feature type="transmembrane region" description="Helical" evidence="2">
    <location>
        <begin position="366"/>
        <end position="386"/>
    </location>
</feature>
<feature type="transmembrane region" description="Helical" evidence="2">
    <location>
        <begin position="405"/>
        <end position="425"/>
    </location>
</feature>
<feature type="transmembrane region" description="Helical" evidence="2">
    <location>
        <begin position="438"/>
        <end position="458"/>
    </location>
</feature>
<feature type="transmembrane region" description="Helical" evidence="2">
    <location>
        <begin position="494"/>
        <end position="514"/>
    </location>
</feature>
<feature type="transmembrane region" description="Helical" evidence="2">
    <location>
        <begin position="530"/>
        <end position="550"/>
    </location>
</feature>
<keyword id="KW-0997">Cell inner membrane</keyword>
<keyword id="KW-1003">Cell membrane</keyword>
<keyword id="KW-0472">Membrane</keyword>
<keyword id="KW-1185">Reference proteome</keyword>
<keyword id="KW-0769">Symport</keyword>
<keyword id="KW-0812">Transmembrane</keyword>
<keyword id="KW-1133">Transmembrane helix</keyword>
<keyword id="KW-0813">Transport</keyword>
<evidence type="ECO:0000250" key="1">
    <source>
        <dbReference type="UniProtKB" id="P33231"/>
    </source>
</evidence>
<evidence type="ECO:0000255" key="2"/>
<evidence type="ECO:0000305" key="3"/>
<gene>
    <name type="primary">lldP</name>
    <name type="synonym">lctP</name>
    <name type="ordered locus">c4425</name>
</gene>
<name>LLDP_ECOL6</name>
<accession>P65253</accession>
<accession>Q8XDF9</accession>
<comment type="function">
    <text evidence="1">Uptake of L-lactate across the membrane (By similarity). Can also transport D-lactate and glycolate (By similarity). Seems to be driven by a proton motive force (By similarity).</text>
</comment>
<comment type="catalytic activity">
    <reaction evidence="1">
        <text>(S)-lactate(in) + H(+)(in) = (S)-lactate(out) + H(+)(out)</text>
        <dbReference type="Rhea" id="RHEA:29415"/>
        <dbReference type="ChEBI" id="CHEBI:15378"/>
        <dbReference type="ChEBI" id="CHEBI:16651"/>
    </reaction>
    <physiologicalReaction direction="right-to-left" evidence="1">
        <dbReference type="Rhea" id="RHEA:29417"/>
    </physiologicalReaction>
</comment>
<comment type="catalytic activity">
    <reaction evidence="1">
        <text>(R)-lactate(in) + H(+)(in) = (R)-lactate(out) + H(+)(out)</text>
        <dbReference type="Rhea" id="RHEA:71791"/>
        <dbReference type="ChEBI" id="CHEBI:15378"/>
        <dbReference type="ChEBI" id="CHEBI:16004"/>
    </reaction>
    <physiologicalReaction direction="right-to-left" evidence="1">
        <dbReference type="Rhea" id="RHEA:71793"/>
    </physiologicalReaction>
</comment>
<comment type="catalytic activity">
    <reaction evidence="1">
        <text>glycolate(in) + H(+)(in) = glycolate(out) + H(+)(out)</text>
        <dbReference type="Rhea" id="RHEA:29411"/>
        <dbReference type="ChEBI" id="CHEBI:15378"/>
        <dbReference type="ChEBI" id="CHEBI:29805"/>
    </reaction>
    <physiologicalReaction direction="right-to-left" evidence="1">
        <dbReference type="Rhea" id="RHEA:29413"/>
    </physiologicalReaction>
</comment>
<comment type="subcellular location">
    <subcellularLocation>
        <location evidence="1">Cell inner membrane</location>
        <topology evidence="2">Multi-pass membrane protein</topology>
    </subcellularLocation>
</comment>
<comment type="similarity">
    <text evidence="3">Belongs to the lactate permease family.</text>
</comment>
<comment type="sequence caution" evidence="3">
    <conflict type="erroneous initiation">
        <sequence resource="EMBL-CDS" id="AAN82861"/>
    </conflict>
</comment>
<sequence length="551" mass="59186">MNLWQQNYDPAGNIWLSSLIASLPILFFFFALIKLKLKGYVAASWTVAIALAVALLFYKMPVANALASVVYGFFYGLWPIAWIIIAAVFVYKISVKTGQFDIIRSSILSITPDQRLQMLIVGFCFGAFLEGAAGFGAPVAITAALLVGLGFKPLYAAGLCLIVNTAPVAFGAMGIPILVAGQVTGIDSFEIGQMVGRQLPFMTIIVLFWIMAIMDGWRGIKETWPAVVVAGGSFAIAQYLSSNFIGPELPDIISSLVSLLCLTLFLKRWQPVRVFRFGDLGASQVDMTLAHTGYTAGQVLRAWTPFLFLTATVTLWSIPPFKALFASGGALYEWVINIPVPYLDKLVARMPPVVSEATAYAAVFKFDWFSATGTAILFAALLSIVWLKMKPSDAISTFGSTLKELALPIYSIGMVLAFAFISNYSGLSSTLALALAHTGHAFTFFSPFLGWLGVFLTGSDTSSNALFAALQATAAQQIGVSDLLLVAANTTGGVTGKMISPQSIAIACAAVGLVGKESDLFRFTVKHSLIFTCMVGVITTLQAYVLTWMIP</sequence>
<organism>
    <name type="scientific">Escherichia coli O6:H1 (strain CFT073 / ATCC 700928 / UPEC)</name>
    <dbReference type="NCBI Taxonomy" id="199310"/>
    <lineage>
        <taxon>Bacteria</taxon>
        <taxon>Pseudomonadati</taxon>
        <taxon>Pseudomonadota</taxon>
        <taxon>Gammaproteobacteria</taxon>
        <taxon>Enterobacterales</taxon>
        <taxon>Enterobacteriaceae</taxon>
        <taxon>Escherichia</taxon>
    </lineage>
</organism>
<dbReference type="EMBL" id="AE014075">
    <property type="protein sequence ID" value="AAN82861.1"/>
    <property type="status" value="ALT_INIT"/>
    <property type="molecule type" value="Genomic_DNA"/>
</dbReference>
<dbReference type="RefSeq" id="WP_001297977.1">
    <property type="nucleotide sequence ID" value="NZ_CP051263.1"/>
</dbReference>
<dbReference type="STRING" id="199310.c4425"/>
<dbReference type="GeneID" id="75202175"/>
<dbReference type="KEGG" id="ecc:c4425"/>
<dbReference type="eggNOG" id="COG1620">
    <property type="taxonomic scope" value="Bacteria"/>
</dbReference>
<dbReference type="HOGENOM" id="CLU_021628_0_0_6"/>
<dbReference type="Proteomes" id="UP000001410">
    <property type="component" value="Chromosome"/>
</dbReference>
<dbReference type="GO" id="GO:0005886">
    <property type="term" value="C:plasma membrane"/>
    <property type="evidence" value="ECO:0007669"/>
    <property type="project" value="UniProtKB-SubCell"/>
</dbReference>
<dbReference type="GO" id="GO:0015129">
    <property type="term" value="F:lactate transmembrane transporter activity"/>
    <property type="evidence" value="ECO:0007669"/>
    <property type="project" value="InterPro"/>
</dbReference>
<dbReference type="GO" id="GO:0015295">
    <property type="term" value="F:solute:proton symporter activity"/>
    <property type="evidence" value="ECO:0007669"/>
    <property type="project" value="TreeGrafter"/>
</dbReference>
<dbReference type="InterPro" id="IPR003804">
    <property type="entry name" value="Lactate_perm"/>
</dbReference>
<dbReference type="NCBIfam" id="TIGR00795">
    <property type="entry name" value="lctP"/>
    <property type="match status" value="1"/>
</dbReference>
<dbReference type="NCBIfam" id="NF007740">
    <property type="entry name" value="PRK10420.1"/>
    <property type="match status" value="1"/>
</dbReference>
<dbReference type="PANTHER" id="PTHR30003:SF0">
    <property type="entry name" value="GLYCOLATE PERMEASE GLCA-RELATED"/>
    <property type="match status" value="1"/>
</dbReference>
<dbReference type="PANTHER" id="PTHR30003">
    <property type="entry name" value="L-LACTATE PERMEASE"/>
    <property type="match status" value="1"/>
</dbReference>
<dbReference type="Pfam" id="PF02652">
    <property type="entry name" value="Lactate_perm"/>
    <property type="match status" value="1"/>
</dbReference>